<reference key="1">
    <citation type="journal article" date="2009" name="PLoS Genet.">
        <title>Organised genome dynamics in the Escherichia coli species results in highly diverse adaptive paths.</title>
        <authorList>
            <person name="Touchon M."/>
            <person name="Hoede C."/>
            <person name="Tenaillon O."/>
            <person name="Barbe V."/>
            <person name="Baeriswyl S."/>
            <person name="Bidet P."/>
            <person name="Bingen E."/>
            <person name="Bonacorsi S."/>
            <person name="Bouchier C."/>
            <person name="Bouvet O."/>
            <person name="Calteau A."/>
            <person name="Chiapello H."/>
            <person name="Clermont O."/>
            <person name="Cruveiller S."/>
            <person name="Danchin A."/>
            <person name="Diard M."/>
            <person name="Dossat C."/>
            <person name="Karoui M.E."/>
            <person name="Frapy E."/>
            <person name="Garry L."/>
            <person name="Ghigo J.M."/>
            <person name="Gilles A.M."/>
            <person name="Johnson J."/>
            <person name="Le Bouguenec C."/>
            <person name="Lescat M."/>
            <person name="Mangenot S."/>
            <person name="Martinez-Jehanne V."/>
            <person name="Matic I."/>
            <person name="Nassif X."/>
            <person name="Oztas S."/>
            <person name="Petit M.A."/>
            <person name="Pichon C."/>
            <person name="Rouy Z."/>
            <person name="Ruf C.S."/>
            <person name="Schneider D."/>
            <person name="Tourret J."/>
            <person name="Vacherie B."/>
            <person name="Vallenet D."/>
            <person name="Medigue C."/>
            <person name="Rocha E.P.C."/>
            <person name="Denamur E."/>
        </authorList>
    </citation>
    <scope>NUCLEOTIDE SEQUENCE [LARGE SCALE GENOMIC DNA]</scope>
    <source>
        <strain>ED1a</strain>
    </source>
</reference>
<accession>B7MNV0</accession>
<comment type="function">
    <text evidence="1">Cell wall formation.</text>
</comment>
<comment type="catalytic activity">
    <reaction evidence="1">
        <text>UDP-N-acetyl-alpha-D-muramate + L-alanine + ATP = UDP-N-acetyl-alpha-D-muramoyl-L-alanine + ADP + phosphate + H(+)</text>
        <dbReference type="Rhea" id="RHEA:23372"/>
        <dbReference type="ChEBI" id="CHEBI:15378"/>
        <dbReference type="ChEBI" id="CHEBI:30616"/>
        <dbReference type="ChEBI" id="CHEBI:43474"/>
        <dbReference type="ChEBI" id="CHEBI:57972"/>
        <dbReference type="ChEBI" id="CHEBI:70757"/>
        <dbReference type="ChEBI" id="CHEBI:83898"/>
        <dbReference type="ChEBI" id="CHEBI:456216"/>
        <dbReference type="EC" id="6.3.2.8"/>
    </reaction>
</comment>
<comment type="pathway">
    <text evidence="1">Cell wall biogenesis; peptidoglycan biosynthesis.</text>
</comment>
<comment type="subcellular location">
    <subcellularLocation>
        <location evidence="1">Cytoplasm</location>
    </subcellularLocation>
</comment>
<comment type="similarity">
    <text evidence="1">Belongs to the MurCDEF family.</text>
</comment>
<proteinExistence type="inferred from homology"/>
<name>MURC_ECO81</name>
<gene>
    <name evidence="1" type="primary">murC</name>
    <name type="ordered locus">ECED1_0092</name>
</gene>
<dbReference type="EC" id="6.3.2.8" evidence="1"/>
<dbReference type="EMBL" id="CU928162">
    <property type="protein sequence ID" value="CAR06315.1"/>
    <property type="molecule type" value="Genomic_DNA"/>
</dbReference>
<dbReference type="RefSeq" id="WP_001096048.1">
    <property type="nucleotide sequence ID" value="NC_011745.1"/>
</dbReference>
<dbReference type="SMR" id="B7MNV0"/>
<dbReference type="GeneID" id="75169991"/>
<dbReference type="KEGG" id="ecq:ECED1_0092"/>
<dbReference type="HOGENOM" id="CLU_028104_2_2_6"/>
<dbReference type="UniPathway" id="UPA00219"/>
<dbReference type="Proteomes" id="UP000000748">
    <property type="component" value="Chromosome"/>
</dbReference>
<dbReference type="GO" id="GO:0005737">
    <property type="term" value="C:cytoplasm"/>
    <property type="evidence" value="ECO:0007669"/>
    <property type="project" value="UniProtKB-SubCell"/>
</dbReference>
<dbReference type="GO" id="GO:0005524">
    <property type="term" value="F:ATP binding"/>
    <property type="evidence" value="ECO:0007669"/>
    <property type="project" value="UniProtKB-UniRule"/>
</dbReference>
<dbReference type="GO" id="GO:0008763">
    <property type="term" value="F:UDP-N-acetylmuramate-L-alanine ligase activity"/>
    <property type="evidence" value="ECO:0007669"/>
    <property type="project" value="UniProtKB-UniRule"/>
</dbReference>
<dbReference type="GO" id="GO:0051301">
    <property type="term" value="P:cell division"/>
    <property type="evidence" value="ECO:0007669"/>
    <property type="project" value="UniProtKB-KW"/>
</dbReference>
<dbReference type="GO" id="GO:0071555">
    <property type="term" value="P:cell wall organization"/>
    <property type="evidence" value="ECO:0007669"/>
    <property type="project" value="UniProtKB-KW"/>
</dbReference>
<dbReference type="GO" id="GO:0009252">
    <property type="term" value="P:peptidoglycan biosynthetic process"/>
    <property type="evidence" value="ECO:0007669"/>
    <property type="project" value="UniProtKB-UniRule"/>
</dbReference>
<dbReference type="GO" id="GO:0008360">
    <property type="term" value="P:regulation of cell shape"/>
    <property type="evidence" value="ECO:0007669"/>
    <property type="project" value="UniProtKB-KW"/>
</dbReference>
<dbReference type="FunFam" id="3.40.1190.10:FF:000001">
    <property type="entry name" value="UDP-N-acetylmuramate--L-alanine ligase"/>
    <property type="match status" value="1"/>
</dbReference>
<dbReference type="FunFam" id="3.40.50.720:FF:000046">
    <property type="entry name" value="UDP-N-acetylmuramate--L-alanine ligase"/>
    <property type="match status" value="1"/>
</dbReference>
<dbReference type="FunFam" id="3.90.190.20:FF:000001">
    <property type="entry name" value="UDP-N-acetylmuramate--L-alanine ligase"/>
    <property type="match status" value="1"/>
</dbReference>
<dbReference type="Gene3D" id="3.90.190.20">
    <property type="entry name" value="Mur ligase, C-terminal domain"/>
    <property type="match status" value="1"/>
</dbReference>
<dbReference type="Gene3D" id="3.40.1190.10">
    <property type="entry name" value="Mur-like, catalytic domain"/>
    <property type="match status" value="1"/>
</dbReference>
<dbReference type="Gene3D" id="3.40.50.720">
    <property type="entry name" value="NAD(P)-binding Rossmann-like Domain"/>
    <property type="match status" value="1"/>
</dbReference>
<dbReference type="HAMAP" id="MF_00046">
    <property type="entry name" value="MurC"/>
    <property type="match status" value="1"/>
</dbReference>
<dbReference type="InterPro" id="IPR036565">
    <property type="entry name" value="Mur-like_cat_sf"/>
</dbReference>
<dbReference type="InterPro" id="IPR004101">
    <property type="entry name" value="Mur_ligase_C"/>
</dbReference>
<dbReference type="InterPro" id="IPR036615">
    <property type="entry name" value="Mur_ligase_C_dom_sf"/>
</dbReference>
<dbReference type="InterPro" id="IPR013221">
    <property type="entry name" value="Mur_ligase_cen"/>
</dbReference>
<dbReference type="InterPro" id="IPR000713">
    <property type="entry name" value="Mur_ligase_N"/>
</dbReference>
<dbReference type="InterPro" id="IPR050061">
    <property type="entry name" value="MurCDEF_pg_biosynth"/>
</dbReference>
<dbReference type="InterPro" id="IPR005758">
    <property type="entry name" value="UDP-N-AcMur_Ala_ligase_MurC"/>
</dbReference>
<dbReference type="NCBIfam" id="TIGR01082">
    <property type="entry name" value="murC"/>
    <property type="match status" value="1"/>
</dbReference>
<dbReference type="PANTHER" id="PTHR43445:SF3">
    <property type="entry name" value="UDP-N-ACETYLMURAMATE--L-ALANINE LIGASE"/>
    <property type="match status" value="1"/>
</dbReference>
<dbReference type="PANTHER" id="PTHR43445">
    <property type="entry name" value="UDP-N-ACETYLMURAMATE--L-ALANINE LIGASE-RELATED"/>
    <property type="match status" value="1"/>
</dbReference>
<dbReference type="Pfam" id="PF01225">
    <property type="entry name" value="Mur_ligase"/>
    <property type="match status" value="1"/>
</dbReference>
<dbReference type="Pfam" id="PF02875">
    <property type="entry name" value="Mur_ligase_C"/>
    <property type="match status" value="1"/>
</dbReference>
<dbReference type="Pfam" id="PF08245">
    <property type="entry name" value="Mur_ligase_M"/>
    <property type="match status" value="1"/>
</dbReference>
<dbReference type="SUPFAM" id="SSF51984">
    <property type="entry name" value="MurCD N-terminal domain"/>
    <property type="match status" value="1"/>
</dbReference>
<dbReference type="SUPFAM" id="SSF53623">
    <property type="entry name" value="MurD-like peptide ligases, catalytic domain"/>
    <property type="match status" value="1"/>
</dbReference>
<dbReference type="SUPFAM" id="SSF53244">
    <property type="entry name" value="MurD-like peptide ligases, peptide-binding domain"/>
    <property type="match status" value="1"/>
</dbReference>
<keyword id="KW-0067">ATP-binding</keyword>
<keyword id="KW-0131">Cell cycle</keyword>
<keyword id="KW-0132">Cell division</keyword>
<keyword id="KW-0133">Cell shape</keyword>
<keyword id="KW-0961">Cell wall biogenesis/degradation</keyword>
<keyword id="KW-0963">Cytoplasm</keyword>
<keyword id="KW-0436">Ligase</keyword>
<keyword id="KW-0547">Nucleotide-binding</keyword>
<keyword id="KW-0573">Peptidoglycan synthesis</keyword>
<protein>
    <recommendedName>
        <fullName evidence="1">UDP-N-acetylmuramate--L-alanine ligase</fullName>
        <ecNumber evidence="1">6.3.2.8</ecNumber>
    </recommendedName>
    <alternativeName>
        <fullName evidence="1">UDP-N-acetylmuramoyl-L-alanine synthetase</fullName>
    </alternativeName>
</protein>
<organism>
    <name type="scientific">Escherichia coli O81 (strain ED1a)</name>
    <dbReference type="NCBI Taxonomy" id="585397"/>
    <lineage>
        <taxon>Bacteria</taxon>
        <taxon>Pseudomonadati</taxon>
        <taxon>Pseudomonadota</taxon>
        <taxon>Gammaproteobacteria</taxon>
        <taxon>Enterobacterales</taxon>
        <taxon>Enterobacteriaceae</taxon>
        <taxon>Escherichia</taxon>
    </lineage>
</organism>
<evidence type="ECO:0000255" key="1">
    <source>
        <dbReference type="HAMAP-Rule" id="MF_00046"/>
    </source>
</evidence>
<sequence>MNTQQLAKLRSIVPEMRRVRHIHFVGIGGAGMGGIAEVLANEGYQISGSDLAPNPVTQQLMNLGATIYFNHRPENVRDASVVVVSSAISADNPEIVAAHEARIPVIRRAEMLAELMRFRHGIAIAGTHGKTTTTAMVSSIYAEAGLDPTFVNGGLVKAAGVHARLGHGRYLIAEADESDASFLHLQPMVAIVTNIEADHMDTYQGDFENLKQTFINFLHNLPFYGRAVMCVDDPVIRELLPRVGRQTTTYGFSEDADVRVEDYQQIGPQGHFTLLRQDKEPMRVTLNAPGRHNALNAAAAVAVATEEGIDDEAILRALESFQGTGRRFDFLGEFPLEPVNGKSGTAMLVDDYGHHPTEVDATIKAARAGWPDKNLVMLFQPHRFTRTRDLYDDFANVLTQVDTLLMLEVYPAGEAPIPGADSRSLCRTIRGRGKIDPILVPDPAQVAEMLAPVLTGNDLILVQGAGNIGKIARSLAEIKLKPQTPEEEQHD</sequence>
<feature type="chain" id="PRO_1000117413" description="UDP-N-acetylmuramate--L-alanine ligase">
    <location>
        <begin position="1"/>
        <end position="491"/>
    </location>
</feature>
<feature type="binding site" evidence="1">
    <location>
        <begin position="126"/>
        <end position="132"/>
    </location>
    <ligand>
        <name>ATP</name>
        <dbReference type="ChEBI" id="CHEBI:30616"/>
    </ligand>
</feature>